<accession>P49916</accession>
<accession>E5KLB5</accession>
<accession>E5KLB6</accession>
<accession>Q16714</accession>
<accession>Q6NVK3</accession>
<evidence type="ECO:0000250" key="1"/>
<evidence type="ECO:0000255" key="2"/>
<evidence type="ECO:0000255" key="3">
    <source>
        <dbReference type="PROSITE-ProRule" id="PRU00033"/>
    </source>
</evidence>
<evidence type="ECO:0000255" key="4">
    <source>
        <dbReference type="PROSITE-ProRule" id="PRU00264"/>
    </source>
</evidence>
<evidence type="ECO:0000255" key="5">
    <source>
        <dbReference type="PROSITE-ProRule" id="PRU10135"/>
    </source>
</evidence>
<evidence type="ECO:0000256" key="6">
    <source>
        <dbReference type="SAM" id="MobiDB-lite"/>
    </source>
</evidence>
<evidence type="ECO:0000269" key="7">
    <source>
    </source>
</evidence>
<evidence type="ECO:0000269" key="8">
    <source>
    </source>
</evidence>
<evidence type="ECO:0000269" key="9">
    <source>
    </source>
</evidence>
<evidence type="ECO:0000269" key="10">
    <source>
    </source>
</evidence>
<evidence type="ECO:0000269" key="11">
    <source>
    </source>
</evidence>
<evidence type="ECO:0000269" key="12">
    <source>
    </source>
</evidence>
<evidence type="ECO:0000269" key="13">
    <source>
    </source>
</evidence>
<evidence type="ECO:0000269" key="14">
    <source>
    </source>
</evidence>
<evidence type="ECO:0000269" key="15">
    <source>
    </source>
</evidence>
<evidence type="ECO:0000269" key="16">
    <source>
    </source>
</evidence>
<evidence type="ECO:0000269" key="17">
    <source>
    </source>
</evidence>
<evidence type="ECO:0000269" key="18">
    <source ref="4"/>
</evidence>
<evidence type="ECO:0000303" key="19">
    <source>
    </source>
</evidence>
<evidence type="ECO:0000305" key="20"/>
<evidence type="ECO:0000305" key="21">
    <source>
    </source>
</evidence>
<evidence type="ECO:0007744" key="22">
    <source>
        <dbReference type="PDB" id="3L2P"/>
    </source>
</evidence>
<evidence type="ECO:0007744" key="23">
    <source>
    </source>
</evidence>
<evidence type="ECO:0007744" key="24">
    <source>
    </source>
</evidence>
<evidence type="ECO:0007744" key="25">
    <source>
    </source>
</evidence>
<evidence type="ECO:0007744" key="26">
    <source>
    </source>
</evidence>
<evidence type="ECO:0007744" key="27">
    <source>
    </source>
</evidence>
<evidence type="ECO:0007829" key="28">
    <source>
        <dbReference type="PDB" id="1IMO"/>
    </source>
</evidence>
<evidence type="ECO:0007829" key="29">
    <source>
        <dbReference type="PDB" id="1UW0"/>
    </source>
</evidence>
<evidence type="ECO:0007829" key="30">
    <source>
        <dbReference type="PDB" id="3L2P"/>
    </source>
</evidence>
<evidence type="ECO:0007829" key="31">
    <source>
        <dbReference type="PDB" id="3PC7"/>
    </source>
</evidence>
<evidence type="ECO:0007829" key="32">
    <source>
        <dbReference type="PDB" id="3QVG"/>
    </source>
</evidence>
<reference key="1">
    <citation type="journal article" date="1995" name="Mol. Cell. Biol.">
        <title>Molecular cloning and expression of human cDNAs encoding a novel DNA ligase IV and DNA ligase III, an enzyme active in DNA repair and recombination.</title>
        <authorList>
            <person name="Wei Y.-F."/>
            <person name="Robins P."/>
            <person name="Carter K."/>
            <person name="Caldecott K."/>
            <person name="Pappin D.J.C."/>
            <person name="Yu G.-L."/>
            <person name="Wang R.-P."/>
            <person name="Shell B.K."/>
            <person name="Nash R.A."/>
            <person name="Schar P."/>
            <person name="Barnes D.E."/>
            <person name="Haseltine W.A."/>
            <person name="Lindahl T."/>
        </authorList>
    </citation>
    <scope>NUCLEOTIDE SEQUENCE [MRNA] (ISOFORM 3)</scope>
    <scope>INTERACTION WITH XRCC1</scope>
    <source>
        <tissue>Prostate</tissue>
    </source>
</reference>
<reference key="2">
    <citation type="journal article" date="1995" name="Mol. Cell. Biol.">
        <title>Mammalian DNA ligase III: molecular cloning, chromosomal localization, and expression in spermatocytes undergoing meiotic recombination.</title>
        <authorList>
            <person name="Chen J."/>
            <person name="Tomkinson A.E."/>
            <person name="Ramos W."/>
            <person name="Mackey Z.B."/>
            <person name="Danehower S."/>
            <person name="Walter C.A."/>
            <person name="Schultz R.A."/>
            <person name="Besterman J.M."/>
            <person name="Husain I."/>
        </authorList>
    </citation>
    <scope>NUCLEOTIDE SEQUENCE [MRNA] (ISOFORM 4)</scope>
    <source>
        <tissue>Testis</tissue>
    </source>
</reference>
<reference key="3">
    <citation type="journal article" date="2011" name="Nucleic Acids Res.">
        <title>Identification of rare DNA variants in mitochondrial disorders with improved array-based sequencing.</title>
        <authorList>
            <person name="Wang W."/>
            <person name="Shen P."/>
            <person name="Thiyagarajan S."/>
            <person name="Lin S."/>
            <person name="Palm C."/>
            <person name="Horvath R."/>
            <person name="Klopstock T."/>
            <person name="Cutler D."/>
            <person name="Pique L."/>
            <person name="Schrijver I."/>
            <person name="Davis R.W."/>
            <person name="Mindrinos M."/>
            <person name="Speed T.P."/>
            <person name="Scharfe C."/>
        </authorList>
    </citation>
    <scope>NUCLEOTIDE SEQUENCE [GENOMIC DNA]</scope>
    <scope>VARIANT HIS-768</scope>
</reference>
<reference key="4">
    <citation type="submission" date="2002-03" db="EMBL/GenBank/DDBJ databases">
        <authorList>
            <consortium name="NIEHS SNPs program"/>
        </authorList>
    </citation>
    <scope>NUCLEOTIDE SEQUENCE [GENOMIC DNA]</scope>
    <scope>VARIANT HIS-867</scope>
</reference>
<reference key="5">
    <citation type="journal article" date="2006" name="Nature">
        <title>DNA sequence of human chromosome 17 and analysis of rearrangement in the human lineage.</title>
        <authorList>
            <person name="Zody M.C."/>
            <person name="Garber M."/>
            <person name="Adams D.J."/>
            <person name="Sharpe T."/>
            <person name="Harrow J."/>
            <person name="Lupski J.R."/>
            <person name="Nicholson C."/>
            <person name="Searle S.M."/>
            <person name="Wilming L."/>
            <person name="Young S.K."/>
            <person name="Abouelleil A."/>
            <person name="Allen N.R."/>
            <person name="Bi W."/>
            <person name="Bloom T."/>
            <person name="Borowsky M.L."/>
            <person name="Bugalter B.E."/>
            <person name="Butler J."/>
            <person name="Chang J.L."/>
            <person name="Chen C.-K."/>
            <person name="Cook A."/>
            <person name="Corum B."/>
            <person name="Cuomo C.A."/>
            <person name="de Jong P.J."/>
            <person name="DeCaprio D."/>
            <person name="Dewar K."/>
            <person name="FitzGerald M."/>
            <person name="Gilbert J."/>
            <person name="Gibson R."/>
            <person name="Gnerre S."/>
            <person name="Goldstein S."/>
            <person name="Grafham D.V."/>
            <person name="Grocock R."/>
            <person name="Hafez N."/>
            <person name="Hagopian D.S."/>
            <person name="Hart E."/>
            <person name="Norman C.H."/>
            <person name="Humphray S."/>
            <person name="Jaffe D.B."/>
            <person name="Jones M."/>
            <person name="Kamal M."/>
            <person name="Khodiyar V.K."/>
            <person name="LaButti K."/>
            <person name="Laird G."/>
            <person name="Lehoczky J."/>
            <person name="Liu X."/>
            <person name="Lokyitsang T."/>
            <person name="Loveland J."/>
            <person name="Lui A."/>
            <person name="Macdonald P."/>
            <person name="Major J.E."/>
            <person name="Matthews L."/>
            <person name="Mauceli E."/>
            <person name="McCarroll S.A."/>
            <person name="Mihalev A.H."/>
            <person name="Mudge J."/>
            <person name="Nguyen C."/>
            <person name="Nicol R."/>
            <person name="O'Leary S.B."/>
            <person name="Osoegawa K."/>
            <person name="Schwartz D.C."/>
            <person name="Shaw-Smith C."/>
            <person name="Stankiewicz P."/>
            <person name="Steward C."/>
            <person name="Swarbreck D."/>
            <person name="Venkataraman V."/>
            <person name="Whittaker C.A."/>
            <person name="Yang X."/>
            <person name="Zimmer A.R."/>
            <person name="Bradley A."/>
            <person name="Hubbard T."/>
            <person name="Birren B.W."/>
            <person name="Rogers J."/>
            <person name="Lander E.S."/>
            <person name="Nusbaum C."/>
        </authorList>
    </citation>
    <scope>NUCLEOTIDE SEQUENCE [LARGE SCALE GENOMIC DNA]</scope>
</reference>
<reference key="6">
    <citation type="submission" date="2005-09" db="EMBL/GenBank/DDBJ databases">
        <authorList>
            <person name="Mural R.J."/>
            <person name="Istrail S."/>
            <person name="Sutton G.G."/>
            <person name="Florea L."/>
            <person name="Halpern A.L."/>
            <person name="Mobarry C.M."/>
            <person name="Lippert R."/>
            <person name="Walenz B."/>
            <person name="Shatkay H."/>
            <person name="Dew I."/>
            <person name="Miller J.R."/>
            <person name="Flanigan M.J."/>
            <person name="Edwards N.J."/>
            <person name="Bolanos R."/>
            <person name="Fasulo D."/>
            <person name="Halldorsson B.V."/>
            <person name="Hannenhalli S."/>
            <person name="Turner R."/>
            <person name="Yooseph S."/>
            <person name="Lu F."/>
            <person name="Nusskern D.R."/>
            <person name="Shue B.C."/>
            <person name="Zheng X.H."/>
            <person name="Zhong F."/>
            <person name="Delcher A.L."/>
            <person name="Huson D.H."/>
            <person name="Kravitz S.A."/>
            <person name="Mouchard L."/>
            <person name="Reinert K."/>
            <person name="Remington K.A."/>
            <person name="Clark A.G."/>
            <person name="Waterman M.S."/>
            <person name="Eichler E.E."/>
            <person name="Adams M.D."/>
            <person name="Hunkapiller M.W."/>
            <person name="Myers E.W."/>
            <person name="Venter J.C."/>
        </authorList>
    </citation>
    <scope>NUCLEOTIDE SEQUENCE [LARGE SCALE GENOMIC DNA]</scope>
</reference>
<reference key="7">
    <citation type="journal article" date="2004" name="Genome Res.">
        <title>The status, quality, and expansion of the NIH full-length cDNA project: the Mammalian Gene Collection (MGC).</title>
        <authorList>
            <consortium name="The MGC Project Team"/>
        </authorList>
    </citation>
    <scope>NUCLEOTIDE SEQUENCE [LARGE SCALE MRNA] (ISOFORM 1)</scope>
    <source>
        <tissue>Pancreas</tissue>
    </source>
</reference>
<reference key="8">
    <citation type="journal article" date="1999" name="Mol. Cell. Biol.">
        <title>The human DNA ligase III gene encodes nuclear and mitochondrial proteins.</title>
        <authorList>
            <person name="Lakshmipathy U."/>
            <person name="Campbell C."/>
        </authorList>
    </citation>
    <scope>FUNCTION</scope>
    <scope>CATALYTIC ACTIVITY</scope>
    <scope>SUBCELLULAR LOCATION</scope>
    <scope>ALTERNATIVE INITIATION</scope>
</reference>
<reference key="9">
    <citation type="journal article" date="2006" name="Cell">
        <title>Global, in vivo, and site-specific phosphorylation dynamics in signaling networks.</title>
        <authorList>
            <person name="Olsen J.V."/>
            <person name="Blagoev B."/>
            <person name="Gnad F."/>
            <person name="Macek B."/>
            <person name="Kumar C."/>
            <person name="Mortensen P."/>
            <person name="Mann M."/>
        </authorList>
    </citation>
    <scope>IDENTIFICATION BY MASS SPECTROMETRY [LARGE SCALE ANALYSIS]</scope>
    <source>
        <tissue>Cervix carcinoma</tissue>
    </source>
</reference>
<reference key="10">
    <citation type="journal article" date="2006" name="Nat. Biotechnol.">
        <title>A probability-based approach for high-throughput protein phosphorylation analysis and site localization.</title>
        <authorList>
            <person name="Beausoleil S.A."/>
            <person name="Villen J."/>
            <person name="Gerber S.A."/>
            <person name="Rush J."/>
            <person name="Gygi S.P."/>
        </authorList>
    </citation>
    <scope>PHOSPHORYLATION [LARGE SCALE ANALYSIS] AT SER-210</scope>
    <scope>IDENTIFICATION BY MASS SPECTROMETRY [LARGE SCALE ANALYSIS]</scope>
    <source>
        <tissue>Cervix carcinoma</tissue>
    </source>
</reference>
<reference key="11">
    <citation type="journal article" date="2008" name="Proc. Natl. Acad. Sci. U.S.A.">
        <title>A quantitative atlas of mitotic phosphorylation.</title>
        <authorList>
            <person name="Dephoure N."/>
            <person name="Zhou C."/>
            <person name="Villen J."/>
            <person name="Beausoleil S.A."/>
            <person name="Bakalarski C.E."/>
            <person name="Elledge S.J."/>
            <person name="Gygi S.P."/>
        </authorList>
    </citation>
    <scope>PHOSPHORYLATION [LARGE SCALE ANALYSIS] AT SER-227</scope>
    <scope>IDENTIFICATION BY MASS SPECTROMETRY [LARGE SCALE ANALYSIS]</scope>
    <source>
        <tissue>Cervix carcinoma</tissue>
    </source>
</reference>
<reference key="12">
    <citation type="journal article" date="2009" name="Anal. Chem.">
        <title>Lys-N and trypsin cover complementary parts of the phosphoproteome in a refined SCX-based approach.</title>
        <authorList>
            <person name="Gauci S."/>
            <person name="Helbig A.O."/>
            <person name="Slijper M."/>
            <person name="Krijgsveld J."/>
            <person name="Heck A.J."/>
            <person name="Mohammed S."/>
        </authorList>
    </citation>
    <scope>IDENTIFICATION BY MASS SPECTROMETRY [LARGE SCALE ANALYSIS]</scope>
</reference>
<reference key="13">
    <citation type="journal article" date="2009" name="Nucleic Acids Res.">
        <title>Human DNA polymerase beta polymorphism, Arg137Gln, impairs its polymerase activity and interaction with PCNA and the cellular base excision repair capacity.</title>
        <authorList>
            <person name="Guo Z."/>
            <person name="Zheng L."/>
            <person name="Dai H."/>
            <person name="Zhou M."/>
            <person name="Xu H."/>
            <person name="Shen B."/>
        </authorList>
    </citation>
    <scope>INTERACTION WITH POLB</scope>
</reference>
<reference key="14">
    <citation type="journal article" date="2009" name="Sci. Signal.">
        <title>Quantitative phosphoproteomic analysis of T cell receptor signaling reveals system-wide modulation of protein-protein interactions.</title>
        <authorList>
            <person name="Mayya V."/>
            <person name="Lundgren D.H."/>
            <person name="Hwang S.-I."/>
            <person name="Rezaul K."/>
            <person name="Wu L."/>
            <person name="Eng J.K."/>
            <person name="Rodionov V."/>
            <person name="Han D.K."/>
        </authorList>
    </citation>
    <scope>IDENTIFICATION BY MASS SPECTROMETRY [LARGE SCALE ANALYSIS]</scope>
    <source>
        <tissue>Leukemic T-cell</tissue>
    </source>
</reference>
<reference key="15">
    <citation type="journal article" date="2010" name="Sci. Signal.">
        <title>Quantitative phosphoproteomics reveals widespread full phosphorylation site occupancy during mitosis.</title>
        <authorList>
            <person name="Olsen J.V."/>
            <person name="Vermeulen M."/>
            <person name="Santamaria A."/>
            <person name="Kumar C."/>
            <person name="Miller M.L."/>
            <person name="Jensen L.J."/>
            <person name="Gnad F."/>
            <person name="Cox J."/>
            <person name="Jensen T.S."/>
            <person name="Nigg E.A."/>
            <person name="Brunak S."/>
            <person name="Mann M."/>
        </authorList>
    </citation>
    <scope>PHOSPHORYLATION [LARGE SCALE ANALYSIS] AT SER-210</scope>
    <scope>IDENTIFICATION BY MASS SPECTROMETRY [LARGE SCALE ANALYSIS]</scope>
    <source>
        <tissue>Cervix carcinoma</tissue>
    </source>
</reference>
<reference key="16">
    <citation type="journal article" date="2011" name="BMC Syst. Biol.">
        <title>Initial characterization of the human central proteome.</title>
        <authorList>
            <person name="Burkard T.R."/>
            <person name="Planyavsky M."/>
            <person name="Kaupe I."/>
            <person name="Breitwieser F.P."/>
            <person name="Buerckstuemmer T."/>
            <person name="Bennett K.L."/>
            <person name="Superti-Furga G."/>
            <person name="Colinge J."/>
        </authorList>
    </citation>
    <scope>IDENTIFICATION BY MASS SPECTROMETRY [LARGE SCALE ANALYSIS]</scope>
</reference>
<reference key="17">
    <citation type="journal article" date="2011" name="Sci. Signal.">
        <title>System-wide temporal characterization of the proteome and phosphoproteome of human embryonic stem cell differentiation.</title>
        <authorList>
            <person name="Rigbolt K.T."/>
            <person name="Prokhorova T.A."/>
            <person name="Akimov V."/>
            <person name="Henningsen J."/>
            <person name="Johansen P.T."/>
            <person name="Kratchmarova I."/>
            <person name="Kassem M."/>
            <person name="Mann M."/>
            <person name="Olsen J.V."/>
            <person name="Blagoev B."/>
        </authorList>
    </citation>
    <scope>PHOSPHORYLATION [LARGE SCALE ANALYSIS] AT SER-210</scope>
    <scope>IDENTIFICATION BY MASS SPECTROMETRY [LARGE SCALE ANALYSIS]</scope>
</reference>
<reference key="18">
    <citation type="journal article" date="2013" name="J. Proteome Res.">
        <title>Toward a comprehensive characterization of a human cancer cell phosphoproteome.</title>
        <authorList>
            <person name="Zhou H."/>
            <person name="Di Palma S."/>
            <person name="Preisinger C."/>
            <person name="Peng M."/>
            <person name="Polat A.N."/>
            <person name="Heck A.J."/>
            <person name="Mohammed S."/>
        </authorList>
    </citation>
    <scope>PHOSPHORYLATION [LARGE SCALE ANALYSIS] AT SER-210; SER-216; SER-242 AND SER-913</scope>
    <scope>IDENTIFICATION BY MASS SPECTROMETRY [LARGE SCALE ANALYSIS]</scope>
    <source>
        <tissue>Cervix carcinoma</tissue>
        <tissue>Erythroleukemia</tissue>
    </source>
</reference>
<reference key="19">
    <citation type="journal article" date="2014" name="DNA Repair">
        <title>Overexpression of DNA ligase III in mitochondria protects cells against oxidative stress and improves mitochondrial DNA base excision repair.</title>
        <authorList>
            <person name="Akbari M."/>
            <person name="Keijzers G."/>
            <person name="Maynard S."/>
            <person name="Scheibye-Knudsen M."/>
            <person name="Desler C."/>
            <person name="Hickson I.D."/>
            <person name="Bohr V.A."/>
        </authorList>
    </citation>
    <scope>FUNCTION</scope>
    <scope>SUBCELLULAR LOCATION</scope>
</reference>
<reference key="20">
    <citation type="journal article" date="2001" name="Protein Expr. Purif.">
        <title>Expression, purification, and biophysical characterization of the BRCT domain of human DNA ligase IIIalpha.</title>
        <authorList>
            <person name="Thornton K.H."/>
            <person name="Krishnan V.V."/>
            <person name="West M.G."/>
            <person name="Popham J."/>
            <person name="Ramirez M."/>
            <person name="Thelen M.P."/>
            <person name="Cosman M."/>
        </authorList>
    </citation>
    <scope>STRUCTURE BY NMR OF 924-1009</scope>
</reference>
<reference key="21">
    <citation type="journal article" date="2004" name="J. Mol. Biol.">
        <title>Solution structure and DNA binding of the zinc-finger domain from DNA ligase IIIalpha.</title>
        <authorList>
            <person name="Kulczyk A.W."/>
            <person name="Yang J.C."/>
            <person name="Neuhaus D."/>
        </authorList>
    </citation>
    <scope>STRUCTURE BY NMR OF 1-204 IN COMPLEX WITH ZINC</scope>
</reference>
<reference key="22">
    <citation type="journal article" date="2010" name="Biochemistry">
        <title>Human DNA ligase III recognizes DNA ends by dynamic switching between two DNA-bound states.</title>
        <authorList>
            <person name="Cotner-Gohara E."/>
            <person name="Kim I.K."/>
            <person name="Hammel M."/>
            <person name="Tainer J.A."/>
            <person name="Tomkinson A.E."/>
            <person name="Ellenberger T."/>
        </authorList>
    </citation>
    <scope>X-RAY CRYSTALLOGRAPHY (3.00 ANGSTROMS) OF 257-833 IN COMPLEX WITH DNA AND AMP</scope>
    <scope>ACTIVE SITE</scope>
    <scope>FUNCTION</scope>
    <scope>CATALYTIC ACTIVITY</scope>
    <scope>DOMAIN</scope>
    <scope>MUTAGENESIS OF LYS-410 AND ARG-414</scope>
</reference>
<reference key="23">
    <citation type="journal article" date="2011" name="Nucleic Acids Res.">
        <title>The structural basis for partitioning of the XRCC1/DNA ligase III-? BRCT-mediated dimer complexes.</title>
        <authorList>
            <person name="Cuneo M.J."/>
            <person name="Gabel S.A."/>
            <person name="Krahn J.M."/>
            <person name="Ricker M.A."/>
            <person name="London R.E."/>
        </authorList>
    </citation>
    <scope>X-RAY CRYSTALLOGRAPHY (1.65 ANGSTROMS) OF 924-1009 IN COMPLEX WITH XRCC1</scope>
    <scope>INTERACTION WITH XRCC1</scope>
</reference>
<reference key="24">
    <citation type="journal article" date="2006" name="Science">
        <title>The consensus coding sequences of human breast and colorectal cancers.</title>
        <authorList>
            <person name="Sjoeblom T."/>
            <person name="Jones S."/>
            <person name="Wood L.D."/>
            <person name="Parsons D.W."/>
            <person name="Lin J."/>
            <person name="Barber T.D."/>
            <person name="Mandelker D."/>
            <person name="Leary R.J."/>
            <person name="Ptak J."/>
            <person name="Silliman N."/>
            <person name="Szabo S."/>
            <person name="Buckhaults P."/>
            <person name="Farrell C."/>
            <person name="Meeh P."/>
            <person name="Markowitz S.D."/>
            <person name="Willis J."/>
            <person name="Dawson D."/>
            <person name="Willson J.K.V."/>
            <person name="Gazdar A.F."/>
            <person name="Hartigan J."/>
            <person name="Wu L."/>
            <person name="Liu C."/>
            <person name="Parmigiani G."/>
            <person name="Park B.H."/>
            <person name="Bachman K.E."/>
            <person name="Papadopoulos N."/>
            <person name="Vogelstein B."/>
            <person name="Kinzler K.W."/>
            <person name="Velculescu V.E."/>
        </authorList>
    </citation>
    <scope>VARIANT [LARGE SCALE ANALYSIS] ASN-717</scope>
</reference>
<reference key="25">
    <citation type="journal article" date="2021" name="Brain">
        <title>Biallelic variants in LIG3 cause a novel mitochondrial neurogastrointestinal encephalomyopathy.</title>
        <authorList>
            <person name="Bonora E."/>
            <person name="Chakrabarty S."/>
            <person name="Kellaris G."/>
            <person name="Tsutsumi M."/>
            <person name="Bianco F."/>
            <person name="Bergamini C."/>
            <person name="Ullah F."/>
            <person name="Isidori F."/>
            <person name="Liparulo I."/>
            <person name="Diquigiovanni C."/>
            <person name="Masin L."/>
            <person name="Rizzardi N."/>
            <person name="Cratere M.G."/>
            <person name="Boschetti E."/>
            <person name="Papa V."/>
            <person name="Maresca A."/>
            <person name="Cenacchi G."/>
            <person name="Casadio R."/>
            <person name="Martelli P."/>
            <person name="Matera I."/>
            <person name="Ceccherini I."/>
            <person name="Fato R."/>
            <person name="Raiola G."/>
            <person name="Arrigo S."/>
            <person name="Signa S."/>
            <person name="Sementa A.R."/>
            <person name="Severino M."/>
            <person name="Striano P."/>
            <person name="Fiorillo C."/>
            <person name="Goto T."/>
            <person name="Uchino S."/>
            <person name="Oyazato Y."/>
            <person name="Nakamura H."/>
            <person name="Mishra S.K."/>
            <person name="Yeh Y.S."/>
            <person name="Kato T."/>
            <person name="Nozu K."/>
            <person name="Tanboon J."/>
            <person name="Morioka I."/>
            <person name="Nishino I."/>
            <person name="Toda T."/>
            <person name="Goto Y.I."/>
            <person name="Ohtake A."/>
            <person name="Kosaki K."/>
            <person name="Yamaguchi Y."/>
            <person name="Nonaka I."/>
            <person name="Iijima K."/>
            <person name="Mimaki M."/>
            <person name="Kurahashi H."/>
            <person name="Raams A."/>
            <person name="MacInnes A."/>
            <person name="Alders M."/>
            <person name="Engelen M."/>
            <person name="Linthorst G."/>
            <person name="de Koning T."/>
            <person name="den Dunnen W."/>
            <person name="Dijkstra G."/>
            <person name="van Spaendonck K."/>
            <person name="van Gent D.C."/>
            <person name="Aronica E.M."/>
            <person name="Picco P."/>
            <person name="Carelli V."/>
            <person name="Seri M."/>
            <person name="Katsanis N."/>
            <person name="Duijkers F.A.M."/>
            <person name="Taniguchi-Ikeda M."/>
            <person name="De Giorgio R."/>
        </authorList>
    </citation>
    <scope>VARIANTS MTDPS20 267-ARG--CYS-1009 DEL; ASN-537; LEU-609; 811-ARG--CYS-1009 DEL; ARG-964 AND TYR-999</scope>
    <scope>CHARACTERIZATION OF VARIANTS MTDPS20 ASN-537; LEU-609; ARG-964 AND TYR-999</scope>
    <scope>INVOLVEMENT IN MTDPS20</scope>
    <scope>INTERACTION WITH POLG</scope>
</reference>
<reference key="26">
    <citation type="journal article" date="2021" name="Brain">
        <title>Myopathic mitochondrial DNA depletion syndrome associated with biallelic variants in LIG3.</title>
        <authorList>
            <person name="Invernizzi F."/>
            <person name="Legati A."/>
            <person name="Nasca A."/>
            <person name="Lamantea E."/>
            <person name="Garavaglia B."/>
            <person name="Gusic M."/>
            <person name="Kopajtich R."/>
            <person name="Prokisch H."/>
            <person name="Zeviani M."/>
            <person name="Lamperti C."/>
            <person name="Ghezzi D."/>
        </authorList>
    </citation>
    <scope>VARIANT MTDPS20 29-TRP--CYS-1009 DEL</scope>
    <scope>INVOLVEMENT IN MTDPS20</scope>
</reference>
<dbReference type="EC" id="6.5.1.1" evidence="7 11"/>
<dbReference type="EMBL" id="X84740">
    <property type="protein sequence ID" value="CAA59230.1"/>
    <property type="molecule type" value="mRNA"/>
</dbReference>
<dbReference type="EMBL" id="U40671">
    <property type="protein sequence ID" value="AAA85022.1"/>
    <property type="molecule type" value="mRNA"/>
</dbReference>
<dbReference type="EMBL" id="HQ204826">
    <property type="protein sequence ID" value="ADP89974.1"/>
    <property type="molecule type" value="Genomic_DNA"/>
</dbReference>
<dbReference type="EMBL" id="HQ204826">
    <property type="protein sequence ID" value="ADP89975.1"/>
    <property type="molecule type" value="Genomic_DNA"/>
</dbReference>
<dbReference type="EMBL" id="HQ204827">
    <property type="protein sequence ID" value="ADP89976.1"/>
    <property type="molecule type" value="Genomic_DNA"/>
</dbReference>
<dbReference type="EMBL" id="HQ204827">
    <property type="protein sequence ID" value="ADP89977.1"/>
    <property type="molecule type" value="Genomic_DNA"/>
</dbReference>
<dbReference type="EMBL" id="HQ204828">
    <property type="protein sequence ID" value="ADP89978.1"/>
    <property type="molecule type" value="Genomic_DNA"/>
</dbReference>
<dbReference type="EMBL" id="HQ204828">
    <property type="protein sequence ID" value="ADP89979.1"/>
    <property type="molecule type" value="Genomic_DNA"/>
</dbReference>
<dbReference type="EMBL" id="HQ204829">
    <property type="protein sequence ID" value="ADP89980.1"/>
    <property type="molecule type" value="Genomic_DNA"/>
</dbReference>
<dbReference type="EMBL" id="HQ204829">
    <property type="protein sequence ID" value="ADP89981.1"/>
    <property type="molecule type" value="Genomic_DNA"/>
</dbReference>
<dbReference type="EMBL" id="HQ204830">
    <property type="protein sequence ID" value="ADP89982.1"/>
    <property type="molecule type" value="Genomic_DNA"/>
</dbReference>
<dbReference type="EMBL" id="HQ204830">
    <property type="protein sequence ID" value="ADP89983.1"/>
    <property type="molecule type" value="Genomic_DNA"/>
</dbReference>
<dbReference type="EMBL" id="HQ204831">
    <property type="protein sequence ID" value="ADP89984.1"/>
    <property type="molecule type" value="Genomic_DNA"/>
</dbReference>
<dbReference type="EMBL" id="HQ204831">
    <property type="protein sequence ID" value="ADP89985.1"/>
    <property type="molecule type" value="Genomic_DNA"/>
</dbReference>
<dbReference type="EMBL" id="HQ204832">
    <property type="protein sequence ID" value="ADP89986.1"/>
    <property type="molecule type" value="Genomic_DNA"/>
</dbReference>
<dbReference type="EMBL" id="HQ204832">
    <property type="protein sequence ID" value="ADP89987.1"/>
    <property type="molecule type" value="Genomic_DNA"/>
</dbReference>
<dbReference type="EMBL" id="HQ204833">
    <property type="protein sequence ID" value="ADP89988.1"/>
    <property type="molecule type" value="Genomic_DNA"/>
</dbReference>
<dbReference type="EMBL" id="HQ204833">
    <property type="protein sequence ID" value="ADP89989.1"/>
    <property type="molecule type" value="Genomic_DNA"/>
</dbReference>
<dbReference type="EMBL" id="HQ204834">
    <property type="protein sequence ID" value="ADP89990.1"/>
    <property type="molecule type" value="Genomic_DNA"/>
</dbReference>
<dbReference type="EMBL" id="HQ204834">
    <property type="protein sequence ID" value="ADP89991.1"/>
    <property type="molecule type" value="Genomic_DNA"/>
</dbReference>
<dbReference type="EMBL" id="HQ204835">
    <property type="protein sequence ID" value="ADP89992.1"/>
    <property type="molecule type" value="Genomic_DNA"/>
</dbReference>
<dbReference type="EMBL" id="HQ204835">
    <property type="protein sequence ID" value="ADP89993.1"/>
    <property type="molecule type" value="Genomic_DNA"/>
</dbReference>
<dbReference type="EMBL" id="HQ204836">
    <property type="protein sequence ID" value="ADP89994.1"/>
    <property type="molecule type" value="Genomic_DNA"/>
</dbReference>
<dbReference type="EMBL" id="HQ204836">
    <property type="protein sequence ID" value="ADP89995.1"/>
    <property type="molecule type" value="Genomic_DNA"/>
</dbReference>
<dbReference type="EMBL" id="HQ204837">
    <property type="protein sequence ID" value="ADP89996.1"/>
    <property type="molecule type" value="Genomic_DNA"/>
</dbReference>
<dbReference type="EMBL" id="HQ204837">
    <property type="protein sequence ID" value="ADP89997.1"/>
    <property type="molecule type" value="Genomic_DNA"/>
</dbReference>
<dbReference type="EMBL" id="HQ204838">
    <property type="protein sequence ID" value="ADP89998.1"/>
    <property type="molecule type" value="Genomic_DNA"/>
</dbReference>
<dbReference type="EMBL" id="HQ204838">
    <property type="protein sequence ID" value="ADP89999.1"/>
    <property type="molecule type" value="Genomic_DNA"/>
</dbReference>
<dbReference type="EMBL" id="HQ204839">
    <property type="protein sequence ID" value="ADP90000.1"/>
    <property type="molecule type" value="Genomic_DNA"/>
</dbReference>
<dbReference type="EMBL" id="HQ204839">
    <property type="protein sequence ID" value="ADP90001.1"/>
    <property type="molecule type" value="Genomic_DNA"/>
</dbReference>
<dbReference type="EMBL" id="HQ204840">
    <property type="protein sequence ID" value="ADP90002.1"/>
    <property type="molecule type" value="Genomic_DNA"/>
</dbReference>
<dbReference type="EMBL" id="HQ204840">
    <property type="protein sequence ID" value="ADP90003.1"/>
    <property type="molecule type" value="Genomic_DNA"/>
</dbReference>
<dbReference type="EMBL" id="HQ204841">
    <property type="protein sequence ID" value="ADP90004.1"/>
    <property type="molecule type" value="Genomic_DNA"/>
</dbReference>
<dbReference type="EMBL" id="HQ204841">
    <property type="protein sequence ID" value="ADP90005.1"/>
    <property type="molecule type" value="Genomic_DNA"/>
</dbReference>
<dbReference type="EMBL" id="HQ204842">
    <property type="protein sequence ID" value="ADP90006.1"/>
    <property type="molecule type" value="Genomic_DNA"/>
</dbReference>
<dbReference type="EMBL" id="HQ204842">
    <property type="protein sequence ID" value="ADP90007.1"/>
    <property type="molecule type" value="Genomic_DNA"/>
</dbReference>
<dbReference type="EMBL" id="HQ204843">
    <property type="protein sequence ID" value="ADP90008.1"/>
    <property type="molecule type" value="Genomic_DNA"/>
</dbReference>
<dbReference type="EMBL" id="HQ204843">
    <property type="protein sequence ID" value="ADP90009.1"/>
    <property type="molecule type" value="Genomic_DNA"/>
</dbReference>
<dbReference type="EMBL" id="HQ204844">
    <property type="protein sequence ID" value="ADP90010.1"/>
    <property type="molecule type" value="Genomic_DNA"/>
</dbReference>
<dbReference type="EMBL" id="HQ204844">
    <property type="protein sequence ID" value="ADP90011.1"/>
    <property type="molecule type" value="Genomic_DNA"/>
</dbReference>
<dbReference type="EMBL" id="HQ204845">
    <property type="protein sequence ID" value="ADP90012.1"/>
    <property type="molecule type" value="Genomic_DNA"/>
</dbReference>
<dbReference type="EMBL" id="HQ204845">
    <property type="protein sequence ID" value="ADP90013.1"/>
    <property type="molecule type" value="Genomic_DNA"/>
</dbReference>
<dbReference type="EMBL" id="HQ204846">
    <property type="protein sequence ID" value="ADP90014.1"/>
    <property type="molecule type" value="Genomic_DNA"/>
</dbReference>
<dbReference type="EMBL" id="HQ204846">
    <property type="protein sequence ID" value="ADP90015.1"/>
    <property type="molecule type" value="Genomic_DNA"/>
</dbReference>
<dbReference type="EMBL" id="HQ204847">
    <property type="protein sequence ID" value="ADP90016.1"/>
    <property type="molecule type" value="Genomic_DNA"/>
</dbReference>
<dbReference type="EMBL" id="HQ204847">
    <property type="protein sequence ID" value="ADP90017.1"/>
    <property type="molecule type" value="Genomic_DNA"/>
</dbReference>
<dbReference type="EMBL" id="HQ204848">
    <property type="protein sequence ID" value="ADP90018.1"/>
    <property type="molecule type" value="Genomic_DNA"/>
</dbReference>
<dbReference type="EMBL" id="HQ204848">
    <property type="protein sequence ID" value="ADP90019.1"/>
    <property type="molecule type" value="Genomic_DNA"/>
</dbReference>
<dbReference type="EMBL" id="HQ204849">
    <property type="protein sequence ID" value="ADP90020.1"/>
    <property type="molecule type" value="Genomic_DNA"/>
</dbReference>
<dbReference type="EMBL" id="HQ204849">
    <property type="protein sequence ID" value="ADP90021.1"/>
    <property type="molecule type" value="Genomic_DNA"/>
</dbReference>
<dbReference type="EMBL" id="HQ204850">
    <property type="protein sequence ID" value="ADP90022.1"/>
    <property type="molecule type" value="Genomic_DNA"/>
</dbReference>
<dbReference type="EMBL" id="HQ204850">
    <property type="protein sequence ID" value="ADP90023.1"/>
    <property type="molecule type" value="Genomic_DNA"/>
</dbReference>
<dbReference type="EMBL" id="HQ204851">
    <property type="protein sequence ID" value="ADP90024.1"/>
    <property type="molecule type" value="Genomic_DNA"/>
</dbReference>
<dbReference type="EMBL" id="HQ204851">
    <property type="protein sequence ID" value="ADP90025.1"/>
    <property type="molecule type" value="Genomic_DNA"/>
</dbReference>
<dbReference type="EMBL" id="HQ204852">
    <property type="protein sequence ID" value="ADP90026.1"/>
    <property type="molecule type" value="Genomic_DNA"/>
</dbReference>
<dbReference type="EMBL" id="HQ204852">
    <property type="protein sequence ID" value="ADP90027.1"/>
    <property type="molecule type" value="Genomic_DNA"/>
</dbReference>
<dbReference type="EMBL" id="HQ204853">
    <property type="protein sequence ID" value="ADP90028.1"/>
    <property type="molecule type" value="Genomic_DNA"/>
</dbReference>
<dbReference type="EMBL" id="HQ204853">
    <property type="protein sequence ID" value="ADP90029.1"/>
    <property type="molecule type" value="Genomic_DNA"/>
</dbReference>
<dbReference type="EMBL" id="HQ204854">
    <property type="protein sequence ID" value="ADP90030.1"/>
    <property type="molecule type" value="Genomic_DNA"/>
</dbReference>
<dbReference type="EMBL" id="HQ204854">
    <property type="protein sequence ID" value="ADP90031.1"/>
    <property type="molecule type" value="Genomic_DNA"/>
</dbReference>
<dbReference type="EMBL" id="HQ204855">
    <property type="protein sequence ID" value="ADP90032.1"/>
    <property type="molecule type" value="Genomic_DNA"/>
</dbReference>
<dbReference type="EMBL" id="HQ204855">
    <property type="protein sequence ID" value="ADP90033.1"/>
    <property type="molecule type" value="Genomic_DNA"/>
</dbReference>
<dbReference type="EMBL" id="HQ204856">
    <property type="protein sequence ID" value="ADP90034.1"/>
    <property type="molecule type" value="Genomic_DNA"/>
</dbReference>
<dbReference type="EMBL" id="HQ204856">
    <property type="protein sequence ID" value="ADP90035.1"/>
    <property type="molecule type" value="Genomic_DNA"/>
</dbReference>
<dbReference type="EMBL" id="HQ204857">
    <property type="protein sequence ID" value="ADP90036.1"/>
    <property type="molecule type" value="Genomic_DNA"/>
</dbReference>
<dbReference type="EMBL" id="HQ204857">
    <property type="protein sequence ID" value="ADP90037.1"/>
    <property type="molecule type" value="Genomic_DNA"/>
</dbReference>
<dbReference type="EMBL" id="HQ204858">
    <property type="protein sequence ID" value="ADP90038.1"/>
    <property type="molecule type" value="Genomic_DNA"/>
</dbReference>
<dbReference type="EMBL" id="HQ204858">
    <property type="protein sequence ID" value="ADP90039.1"/>
    <property type="molecule type" value="Genomic_DNA"/>
</dbReference>
<dbReference type="EMBL" id="HQ204859">
    <property type="protein sequence ID" value="ADP90040.1"/>
    <property type="molecule type" value="Genomic_DNA"/>
</dbReference>
<dbReference type="EMBL" id="HQ204859">
    <property type="protein sequence ID" value="ADP90041.1"/>
    <property type="molecule type" value="Genomic_DNA"/>
</dbReference>
<dbReference type="EMBL" id="HQ204860">
    <property type="protein sequence ID" value="ADP90042.1"/>
    <property type="molecule type" value="Genomic_DNA"/>
</dbReference>
<dbReference type="EMBL" id="HQ204860">
    <property type="protein sequence ID" value="ADP90043.1"/>
    <property type="molecule type" value="Genomic_DNA"/>
</dbReference>
<dbReference type="EMBL" id="HQ204861">
    <property type="protein sequence ID" value="ADP90044.1"/>
    <property type="molecule type" value="Genomic_DNA"/>
</dbReference>
<dbReference type="EMBL" id="HQ204861">
    <property type="protein sequence ID" value="ADP90045.1"/>
    <property type="molecule type" value="Genomic_DNA"/>
</dbReference>
<dbReference type="EMBL" id="HQ204862">
    <property type="protein sequence ID" value="ADP90046.1"/>
    <property type="molecule type" value="Genomic_DNA"/>
</dbReference>
<dbReference type="EMBL" id="HQ204862">
    <property type="protein sequence ID" value="ADP90047.1"/>
    <property type="molecule type" value="Genomic_DNA"/>
</dbReference>
<dbReference type="EMBL" id="HQ204863">
    <property type="protein sequence ID" value="ADP90048.1"/>
    <property type="molecule type" value="Genomic_DNA"/>
</dbReference>
<dbReference type="EMBL" id="HQ204863">
    <property type="protein sequence ID" value="ADP90049.1"/>
    <property type="molecule type" value="Genomic_DNA"/>
</dbReference>
<dbReference type="EMBL" id="HQ204864">
    <property type="protein sequence ID" value="ADP90050.1"/>
    <property type="molecule type" value="Genomic_DNA"/>
</dbReference>
<dbReference type="EMBL" id="HQ204864">
    <property type="protein sequence ID" value="ADP90051.1"/>
    <property type="molecule type" value="Genomic_DNA"/>
</dbReference>
<dbReference type="EMBL" id="HQ204865">
    <property type="protein sequence ID" value="ADP90052.1"/>
    <property type="molecule type" value="Genomic_DNA"/>
</dbReference>
<dbReference type="EMBL" id="HQ204865">
    <property type="protein sequence ID" value="ADP90053.1"/>
    <property type="molecule type" value="Genomic_DNA"/>
</dbReference>
<dbReference type="EMBL" id="AF491645">
    <property type="protein sequence ID" value="AAL91592.1"/>
    <property type="molecule type" value="Genomic_DNA"/>
</dbReference>
<dbReference type="EMBL" id="AC004223">
    <property type="status" value="NOT_ANNOTATED_CDS"/>
    <property type="molecule type" value="Genomic_DNA"/>
</dbReference>
<dbReference type="EMBL" id="AC022903">
    <property type="status" value="NOT_ANNOTATED_CDS"/>
    <property type="molecule type" value="Genomic_DNA"/>
</dbReference>
<dbReference type="EMBL" id="CH471147">
    <property type="protein sequence ID" value="EAW80197.1"/>
    <property type="molecule type" value="Genomic_DNA"/>
</dbReference>
<dbReference type="EMBL" id="CH471147">
    <property type="protein sequence ID" value="EAW80199.1"/>
    <property type="molecule type" value="Genomic_DNA"/>
</dbReference>
<dbReference type="EMBL" id="BC068005">
    <property type="protein sequence ID" value="AAH68005.1"/>
    <property type="molecule type" value="mRNA"/>
</dbReference>
<dbReference type="CCDS" id="CCDS11284.2">
    <molecule id="P49916-1"/>
</dbReference>
<dbReference type="CCDS" id="CCDS11285.2">
    <molecule id="P49916-2"/>
</dbReference>
<dbReference type="PIR" id="I37292">
    <property type="entry name" value="I37292"/>
</dbReference>
<dbReference type="RefSeq" id="NP_002302.2">
    <molecule id="P49916-2"/>
    <property type="nucleotide sequence ID" value="NM_002311.5"/>
</dbReference>
<dbReference type="RefSeq" id="NP_039269.2">
    <molecule id="P49916-1"/>
    <property type="nucleotide sequence ID" value="NM_013975.4"/>
</dbReference>
<dbReference type="RefSeq" id="XP_016880113.1">
    <molecule id="P49916-1"/>
    <property type="nucleotide sequence ID" value="XM_017024624.2"/>
</dbReference>
<dbReference type="RefSeq" id="XP_054172030.1">
    <molecule id="P49916-1"/>
    <property type="nucleotide sequence ID" value="XM_054316055.1"/>
</dbReference>
<dbReference type="PDB" id="1IMO">
    <property type="method" value="NMR"/>
    <property type="chains" value="A=924-1009"/>
</dbReference>
<dbReference type="PDB" id="1IN1">
    <property type="method" value="NMR"/>
    <property type="chains" value="A=924-1009"/>
</dbReference>
<dbReference type="PDB" id="1UW0">
    <property type="method" value="NMR"/>
    <property type="chains" value="A=88-204"/>
</dbReference>
<dbReference type="PDB" id="3L2P">
    <property type="method" value="X-ray"/>
    <property type="resolution" value="3.00 A"/>
    <property type="chains" value="A=257-833"/>
</dbReference>
<dbReference type="PDB" id="3PC7">
    <property type="method" value="X-ray"/>
    <property type="resolution" value="1.65 A"/>
    <property type="chains" value="A/B=924-1009"/>
</dbReference>
<dbReference type="PDB" id="3PC8">
    <property type="method" value="X-ray"/>
    <property type="resolution" value="2.31 A"/>
    <property type="chains" value="C/D=924-1008"/>
</dbReference>
<dbReference type="PDB" id="3QVG">
    <property type="method" value="X-ray"/>
    <property type="resolution" value="2.26 A"/>
    <property type="chains" value="A/C=924-1008"/>
</dbReference>
<dbReference type="PDB" id="6WH1">
    <property type="method" value="X-ray"/>
    <property type="resolution" value="2.40 A"/>
    <property type="chains" value="B=932-1008"/>
</dbReference>
<dbReference type="PDBsum" id="1IMO"/>
<dbReference type="PDBsum" id="1IN1"/>
<dbReference type="PDBsum" id="1UW0"/>
<dbReference type="PDBsum" id="3L2P"/>
<dbReference type="PDBsum" id="3PC7"/>
<dbReference type="PDBsum" id="3PC8"/>
<dbReference type="PDBsum" id="3QVG"/>
<dbReference type="PDBsum" id="6WH1"/>
<dbReference type="BMRB" id="P49916"/>
<dbReference type="EMDB" id="EMD-21958"/>
<dbReference type="EMDB" id="EMD-22130"/>
<dbReference type="EMDB" id="EMD-22307"/>
<dbReference type="EMDB" id="EMD-23299"/>
<dbReference type="EMDB" id="EMD-23301"/>
<dbReference type="SASBDB" id="P49916"/>
<dbReference type="SMR" id="P49916"/>
<dbReference type="BioGRID" id="110168">
    <property type="interactions" value="229"/>
</dbReference>
<dbReference type="ComplexPortal" id="CPX-793">
    <property type="entry name" value="XRCC1 DNA repair complex"/>
</dbReference>
<dbReference type="CORUM" id="P49916"/>
<dbReference type="FunCoup" id="P49916">
    <property type="interactions" value="3636"/>
</dbReference>
<dbReference type="IntAct" id="P49916">
    <property type="interactions" value="119"/>
</dbReference>
<dbReference type="MINT" id="P49916"/>
<dbReference type="STRING" id="9606.ENSP00000367787"/>
<dbReference type="BindingDB" id="P49916"/>
<dbReference type="ChEMBL" id="CHEMBL4295773"/>
<dbReference type="DrugBank" id="DB00290">
    <property type="generic name" value="Bleomycin"/>
</dbReference>
<dbReference type="GlyGen" id="P49916">
    <property type="glycosylation" value="5 sites, 1 O-linked glycan (5 sites)"/>
</dbReference>
<dbReference type="iPTMnet" id="P49916"/>
<dbReference type="PhosphoSitePlus" id="P49916"/>
<dbReference type="SwissPalm" id="P49916"/>
<dbReference type="BioMuta" id="LIG3"/>
<dbReference type="DMDM" id="251757259"/>
<dbReference type="jPOST" id="P49916"/>
<dbReference type="MassIVE" id="P49916"/>
<dbReference type="PaxDb" id="9606-ENSP00000367787"/>
<dbReference type="PeptideAtlas" id="P49916"/>
<dbReference type="ProteomicsDB" id="56181">
    <molecule id="P49916-1"/>
</dbReference>
<dbReference type="ProteomicsDB" id="56182">
    <molecule id="P49916-2"/>
</dbReference>
<dbReference type="Pumba" id="P49916"/>
<dbReference type="Antibodypedia" id="1860">
    <property type="antibodies" value="335 antibodies from 35 providers"/>
</dbReference>
<dbReference type="CPTC" id="P49916">
    <property type="antibodies" value="1 antibody"/>
</dbReference>
<dbReference type="DNASU" id="3980"/>
<dbReference type="Ensembl" id="ENST00000262327.9">
    <molecule id="P49916-2"/>
    <property type="protein sequence ID" value="ENSP00000262327.4"/>
    <property type="gene ID" value="ENSG00000005156.12"/>
</dbReference>
<dbReference type="Ensembl" id="ENST00000378526.9">
    <molecule id="P49916-1"/>
    <property type="protein sequence ID" value="ENSP00000367787.3"/>
    <property type="gene ID" value="ENSG00000005156.12"/>
</dbReference>
<dbReference type="GeneID" id="3980"/>
<dbReference type="KEGG" id="hsa:3980"/>
<dbReference type="MANE-Select" id="ENST00000378526.9">
    <property type="protein sequence ID" value="ENSP00000367787.3"/>
    <property type="RefSeq nucleotide sequence ID" value="NM_013975.4"/>
    <property type="RefSeq protein sequence ID" value="NP_039269.2"/>
</dbReference>
<dbReference type="UCSC" id="uc002hij.4">
    <molecule id="P49916-1"/>
    <property type="organism name" value="human"/>
</dbReference>
<dbReference type="AGR" id="HGNC:6600"/>
<dbReference type="CTD" id="3980"/>
<dbReference type="DisGeNET" id="3980"/>
<dbReference type="GeneCards" id="LIG3"/>
<dbReference type="HGNC" id="HGNC:6600">
    <property type="gene designation" value="LIG3"/>
</dbReference>
<dbReference type="HPA" id="ENSG00000005156">
    <property type="expression patterns" value="Low tissue specificity"/>
</dbReference>
<dbReference type="MalaCards" id="LIG3"/>
<dbReference type="MIM" id="600940">
    <property type="type" value="gene"/>
</dbReference>
<dbReference type="MIM" id="619780">
    <property type="type" value="phenotype"/>
</dbReference>
<dbReference type="neXtProt" id="NX_P49916"/>
<dbReference type="OpenTargets" id="ENSG00000005156"/>
<dbReference type="Orphanet" id="298">
    <property type="disease" value="Mitochondrial neurogastrointestinal encephalomyopathy"/>
</dbReference>
<dbReference type="PharmGKB" id="PA30374"/>
<dbReference type="VEuPathDB" id="HostDB:ENSG00000005156"/>
<dbReference type="eggNOG" id="KOG4437">
    <property type="taxonomic scope" value="Eukaryota"/>
</dbReference>
<dbReference type="GeneTree" id="ENSGT00940000156492"/>
<dbReference type="HOGENOM" id="CLU_011787_0_0_1"/>
<dbReference type="InParanoid" id="P49916"/>
<dbReference type="OMA" id="GRWCTVT"/>
<dbReference type="OrthoDB" id="206088at2759"/>
<dbReference type="PAN-GO" id="P49916">
    <property type="GO annotations" value="7 GO annotations based on evolutionary models"/>
</dbReference>
<dbReference type="PhylomeDB" id="P49916"/>
<dbReference type="TreeFam" id="TF316220"/>
<dbReference type="BRENDA" id="6.5.1.1">
    <property type="organism ID" value="2681"/>
</dbReference>
<dbReference type="PathwayCommons" id="P49916"/>
<dbReference type="Reactome" id="R-HSA-110381">
    <property type="pathway name" value="Resolution of AP sites via the single-nucleotide replacement pathway"/>
</dbReference>
<dbReference type="Reactome" id="R-HSA-5649702">
    <property type="pathway name" value="APEX1-Independent Resolution of AP Sites via the Single Nucleotide Replacement Pathway"/>
</dbReference>
<dbReference type="Reactome" id="R-HSA-5685939">
    <property type="pathway name" value="HDR through MMEJ (alt-NHEJ)"/>
</dbReference>
<dbReference type="Reactome" id="R-HSA-5696397">
    <property type="pathway name" value="Gap-filling DNA repair synthesis and ligation in GG-NER"/>
</dbReference>
<dbReference type="Reactome" id="R-HSA-6782210">
    <property type="pathway name" value="Gap-filling DNA repair synthesis and ligation in TC-NER"/>
</dbReference>
<dbReference type="Reactome" id="R-HSA-9913635">
    <molecule id="P49916-1"/>
    <property type="pathway name" value="Strand-asynchronous mitochondrial DNA replication"/>
</dbReference>
<dbReference type="SignaLink" id="P49916"/>
<dbReference type="SIGNOR" id="P49916"/>
<dbReference type="BioGRID-ORCS" id="3980">
    <property type="hits" value="105 hits in 1161 CRISPR screens"/>
</dbReference>
<dbReference type="CD-CODE" id="8C2F96ED">
    <property type="entry name" value="Centrosome"/>
</dbReference>
<dbReference type="CD-CODE" id="91857CE7">
    <property type="entry name" value="Nucleolus"/>
</dbReference>
<dbReference type="ChiTaRS" id="LIG3">
    <property type="organism name" value="human"/>
</dbReference>
<dbReference type="EvolutionaryTrace" id="P49916"/>
<dbReference type="GeneWiki" id="LIG3"/>
<dbReference type="GenomeRNAi" id="3980"/>
<dbReference type="Pharos" id="P49916">
    <property type="development level" value="Tbio"/>
</dbReference>
<dbReference type="PRO" id="PR:P49916"/>
<dbReference type="Proteomes" id="UP000005640">
    <property type="component" value="Chromosome 17"/>
</dbReference>
<dbReference type="RNAct" id="P49916">
    <property type="molecule type" value="protein"/>
</dbReference>
<dbReference type="Bgee" id="ENSG00000005156">
    <property type="expression patterns" value="Expressed in buccal mucosa cell and 184 other cell types or tissues"/>
</dbReference>
<dbReference type="ExpressionAtlas" id="P49916">
    <property type="expression patterns" value="baseline and differential"/>
</dbReference>
<dbReference type="GO" id="GO:0070421">
    <property type="term" value="C:DNA ligase III-XRCC1 complex"/>
    <property type="evidence" value="ECO:0000314"/>
    <property type="project" value="BHF-UCL"/>
</dbReference>
<dbReference type="GO" id="GO:0005759">
    <property type="term" value="C:mitochondrial matrix"/>
    <property type="evidence" value="ECO:0000304"/>
    <property type="project" value="Reactome"/>
</dbReference>
<dbReference type="GO" id="GO:0005739">
    <property type="term" value="C:mitochondrion"/>
    <property type="evidence" value="ECO:0000314"/>
    <property type="project" value="BHF-UCL"/>
</dbReference>
<dbReference type="GO" id="GO:0005654">
    <property type="term" value="C:nucleoplasm"/>
    <property type="evidence" value="ECO:0000314"/>
    <property type="project" value="HPA"/>
</dbReference>
<dbReference type="GO" id="GO:0005634">
    <property type="term" value="C:nucleus"/>
    <property type="evidence" value="ECO:0000314"/>
    <property type="project" value="BHF-UCL"/>
</dbReference>
<dbReference type="GO" id="GO:0005524">
    <property type="term" value="F:ATP binding"/>
    <property type="evidence" value="ECO:0007669"/>
    <property type="project" value="UniProtKB-KW"/>
</dbReference>
<dbReference type="GO" id="GO:0003677">
    <property type="term" value="F:DNA binding"/>
    <property type="evidence" value="ECO:0007669"/>
    <property type="project" value="InterPro"/>
</dbReference>
<dbReference type="GO" id="GO:0003910">
    <property type="term" value="F:DNA ligase (ATP) activity"/>
    <property type="evidence" value="ECO:0000314"/>
    <property type="project" value="BHF-UCL"/>
</dbReference>
<dbReference type="GO" id="GO:0003909">
    <property type="term" value="F:DNA ligase activity"/>
    <property type="evidence" value="ECO:0000314"/>
    <property type="project" value="BHF-UCL"/>
</dbReference>
<dbReference type="GO" id="GO:0008270">
    <property type="term" value="F:zinc ion binding"/>
    <property type="evidence" value="ECO:0007669"/>
    <property type="project" value="UniProtKB-KW"/>
</dbReference>
<dbReference type="GO" id="GO:0006284">
    <property type="term" value="P:base-excision repair"/>
    <property type="evidence" value="ECO:0000314"/>
    <property type="project" value="BHF-UCL"/>
</dbReference>
<dbReference type="GO" id="GO:0006287">
    <property type="term" value="P:base-excision repair, gap-filling"/>
    <property type="evidence" value="ECO:0000304"/>
    <property type="project" value="Reactome"/>
</dbReference>
<dbReference type="GO" id="GO:0051301">
    <property type="term" value="P:cell division"/>
    <property type="evidence" value="ECO:0007669"/>
    <property type="project" value="UniProtKB-KW"/>
</dbReference>
<dbReference type="GO" id="GO:0071897">
    <property type="term" value="P:DNA biosynthetic process"/>
    <property type="evidence" value="ECO:0007669"/>
    <property type="project" value="InterPro"/>
</dbReference>
<dbReference type="GO" id="GO:0006302">
    <property type="term" value="P:double-strand break repair"/>
    <property type="evidence" value="ECO:0000314"/>
    <property type="project" value="BHF-UCL"/>
</dbReference>
<dbReference type="GO" id="GO:0097681">
    <property type="term" value="P:double-strand break repair via alternative nonhomologous end joining"/>
    <property type="evidence" value="ECO:0000316"/>
    <property type="project" value="BHF-UCL"/>
</dbReference>
<dbReference type="GO" id="GO:0000724">
    <property type="term" value="P:double-strand break repair via homologous recombination"/>
    <property type="evidence" value="ECO:0000304"/>
    <property type="project" value="Reactome"/>
</dbReference>
<dbReference type="GO" id="GO:0006273">
    <property type="term" value="P:lagging strand elongation"/>
    <property type="evidence" value="ECO:0000318"/>
    <property type="project" value="GO_Central"/>
</dbReference>
<dbReference type="GO" id="GO:0043504">
    <property type="term" value="P:mitochondrial DNA repair"/>
    <property type="evidence" value="ECO:0000314"/>
    <property type="project" value="BHF-UCL"/>
</dbReference>
<dbReference type="GO" id="GO:0007005">
    <property type="term" value="P:mitochondrion organization"/>
    <property type="evidence" value="ECO:0000314"/>
    <property type="project" value="BHF-UCL"/>
</dbReference>
<dbReference type="GO" id="GO:0090298">
    <property type="term" value="P:negative regulation of mitochondrial DNA replication"/>
    <property type="evidence" value="ECO:0000315"/>
    <property type="project" value="CACAO"/>
</dbReference>
<dbReference type="CDD" id="cd07902">
    <property type="entry name" value="Adenylation_DNA_ligase_III"/>
    <property type="match status" value="1"/>
</dbReference>
<dbReference type="CDD" id="cd18431">
    <property type="entry name" value="BRCT_DNA_ligase_III"/>
    <property type="match status" value="1"/>
</dbReference>
<dbReference type="CDD" id="cd07967">
    <property type="entry name" value="OBF_DNA_ligase_III"/>
    <property type="match status" value="1"/>
</dbReference>
<dbReference type="FunFam" id="1.10.3260.10:FF:000002">
    <property type="entry name" value="DNA ligase"/>
    <property type="match status" value="1"/>
</dbReference>
<dbReference type="FunFam" id="2.40.50.140:FF:000085">
    <property type="entry name" value="DNA ligase"/>
    <property type="match status" value="1"/>
</dbReference>
<dbReference type="FunFam" id="3.30.1740.10:FF:000001">
    <property type="entry name" value="DNA ligase"/>
    <property type="match status" value="1"/>
</dbReference>
<dbReference type="FunFam" id="3.30.470.30:FF:000003">
    <property type="entry name" value="DNA ligase"/>
    <property type="match status" value="1"/>
</dbReference>
<dbReference type="FunFam" id="3.40.50.10190:FF:000032">
    <property type="entry name" value="DNA ligase"/>
    <property type="match status" value="1"/>
</dbReference>
<dbReference type="Gene3D" id="3.30.1490.70">
    <property type="match status" value="1"/>
</dbReference>
<dbReference type="Gene3D" id="3.40.50.10190">
    <property type="entry name" value="BRCT domain"/>
    <property type="match status" value="1"/>
</dbReference>
<dbReference type="Gene3D" id="1.10.3260.10">
    <property type="entry name" value="DNA ligase, ATP-dependent, N-terminal domain"/>
    <property type="match status" value="1"/>
</dbReference>
<dbReference type="Gene3D" id="3.30.470.30">
    <property type="entry name" value="DNA ligase/mRNA capping enzyme"/>
    <property type="match status" value="1"/>
</dbReference>
<dbReference type="Gene3D" id="2.40.50.140">
    <property type="entry name" value="Nucleic acid-binding proteins"/>
    <property type="match status" value="1"/>
</dbReference>
<dbReference type="Gene3D" id="3.30.1740.10">
    <property type="entry name" value="Zinc finger, PARP-type"/>
    <property type="match status" value="1"/>
</dbReference>
<dbReference type="InterPro" id="IPR050191">
    <property type="entry name" value="ATP-dep_DNA_ligase"/>
</dbReference>
<dbReference type="InterPro" id="IPR001357">
    <property type="entry name" value="BRCT_dom"/>
</dbReference>
<dbReference type="InterPro" id="IPR036420">
    <property type="entry name" value="BRCT_dom_sf"/>
</dbReference>
<dbReference type="InterPro" id="IPR000977">
    <property type="entry name" value="DNA_ligase_ATP-dep"/>
</dbReference>
<dbReference type="InterPro" id="IPR012309">
    <property type="entry name" value="DNA_ligase_ATP-dep_C"/>
</dbReference>
<dbReference type="InterPro" id="IPR012310">
    <property type="entry name" value="DNA_ligase_ATP-dep_cent"/>
</dbReference>
<dbReference type="InterPro" id="IPR016059">
    <property type="entry name" value="DNA_ligase_ATP-dep_CS"/>
</dbReference>
<dbReference type="InterPro" id="IPR012308">
    <property type="entry name" value="DNA_ligase_ATP-dep_N"/>
</dbReference>
<dbReference type="InterPro" id="IPR036599">
    <property type="entry name" value="DNA_ligase_N_sf"/>
</dbReference>
<dbReference type="InterPro" id="IPR031916">
    <property type="entry name" value="LIG3_BRCT"/>
</dbReference>
<dbReference type="InterPro" id="IPR012340">
    <property type="entry name" value="NA-bd_OB-fold"/>
</dbReference>
<dbReference type="InterPro" id="IPR001510">
    <property type="entry name" value="Znf_PARP"/>
</dbReference>
<dbReference type="InterPro" id="IPR036957">
    <property type="entry name" value="Znf_PARP_sf"/>
</dbReference>
<dbReference type="NCBIfam" id="TIGR00574">
    <property type="entry name" value="dnl1"/>
    <property type="match status" value="1"/>
</dbReference>
<dbReference type="PANTHER" id="PTHR45674">
    <property type="entry name" value="DNA LIGASE 1/3 FAMILY MEMBER"/>
    <property type="match status" value="1"/>
</dbReference>
<dbReference type="PANTHER" id="PTHR45674:SF9">
    <property type="entry name" value="DNA LIGASE 3"/>
    <property type="match status" value="1"/>
</dbReference>
<dbReference type="Pfam" id="PF04679">
    <property type="entry name" value="DNA_ligase_A_C"/>
    <property type="match status" value="1"/>
</dbReference>
<dbReference type="Pfam" id="PF01068">
    <property type="entry name" value="DNA_ligase_A_M"/>
    <property type="match status" value="1"/>
</dbReference>
<dbReference type="Pfam" id="PF04675">
    <property type="entry name" value="DNA_ligase_A_N"/>
    <property type="match status" value="1"/>
</dbReference>
<dbReference type="Pfam" id="PF16759">
    <property type="entry name" value="LIG3_BRCT"/>
    <property type="match status" value="1"/>
</dbReference>
<dbReference type="Pfam" id="PF00645">
    <property type="entry name" value="zf-PARP"/>
    <property type="match status" value="1"/>
</dbReference>
<dbReference type="SMART" id="SM00292">
    <property type="entry name" value="BRCT"/>
    <property type="match status" value="1"/>
</dbReference>
<dbReference type="SMART" id="SM01336">
    <property type="entry name" value="zf-PARP"/>
    <property type="match status" value="1"/>
</dbReference>
<dbReference type="SUPFAM" id="SSF117018">
    <property type="entry name" value="ATP-dependent DNA ligase DNA-binding domain"/>
    <property type="match status" value="1"/>
</dbReference>
<dbReference type="SUPFAM" id="SSF52113">
    <property type="entry name" value="BRCT domain"/>
    <property type="match status" value="1"/>
</dbReference>
<dbReference type="SUPFAM" id="SSF56091">
    <property type="entry name" value="DNA ligase/mRNA capping enzyme, catalytic domain"/>
    <property type="match status" value="1"/>
</dbReference>
<dbReference type="SUPFAM" id="SSF57716">
    <property type="entry name" value="Glucocorticoid receptor-like (DNA-binding domain)"/>
    <property type="match status" value="1"/>
</dbReference>
<dbReference type="SUPFAM" id="SSF50249">
    <property type="entry name" value="Nucleic acid-binding proteins"/>
    <property type="match status" value="1"/>
</dbReference>
<dbReference type="PROSITE" id="PS50172">
    <property type="entry name" value="BRCT"/>
    <property type="match status" value="1"/>
</dbReference>
<dbReference type="PROSITE" id="PS00697">
    <property type="entry name" value="DNA_LIGASE_A1"/>
    <property type="match status" value="1"/>
</dbReference>
<dbReference type="PROSITE" id="PS00333">
    <property type="entry name" value="DNA_LIGASE_A2"/>
    <property type="match status" value="1"/>
</dbReference>
<dbReference type="PROSITE" id="PS50160">
    <property type="entry name" value="DNA_LIGASE_A3"/>
    <property type="match status" value="1"/>
</dbReference>
<dbReference type="PROSITE" id="PS00347">
    <property type="entry name" value="ZF_PARP_1"/>
    <property type="match status" value="1"/>
</dbReference>
<dbReference type="PROSITE" id="PS50064">
    <property type="entry name" value="ZF_PARP_2"/>
    <property type="match status" value="1"/>
</dbReference>
<keyword id="KW-0002">3D-structure</keyword>
<keyword id="KW-0024">Alternative initiation</keyword>
<keyword id="KW-0025">Alternative splicing</keyword>
<keyword id="KW-0067">ATP-binding</keyword>
<keyword id="KW-0131">Cell cycle</keyword>
<keyword id="KW-0132">Cell division</keyword>
<keyword id="KW-0225">Disease variant</keyword>
<keyword id="KW-0227">DNA damage</keyword>
<keyword id="KW-0233">DNA recombination</keyword>
<keyword id="KW-0234">DNA repair</keyword>
<keyword id="KW-0235">DNA replication</keyword>
<keyword id="KW-0436">Ligase</keyword>
<keyword id="KW-0460">Magnesium</keyword>
<keyword id="KW-0479">Metal-binding</keyword>
<keyword id="KW-0496">Mitochondrion</keyword>
<keyword id="KW-0547">Nucleotide-binding</keyword>
<keyword id="KW-0539">Nucleus</keyword>
<keyword id="KW-0597">Phosphoprotein</keyword>
<keyword id="KW-1274">Primary mitochondrial disease</keyword>
<keyword id="KW-1267">Proteomics identification</keyword>
<keyword id="KW-1185">Reference proteome</keyword>
<keyword id="KW-0809">Transit peptide</keyword>
<keyword id="KW-0862">Zinc</keyword>
<keyword id="KW-0863">Zinc-finger</keyword>
<name>DNLI3_HUMAN</name>
<organism>
    <name type="scientific">Homo sapiens</name>
    <name type="common">Human</name>
    <dbReference type="NCBI Taxonomy" id="9606"/>
    <lineage>
        <taxon>Eukaryota</taxon>
        <taxon>Metazoa</taxon>
        <taxon>Chordata</taxon>
        <taxon>Craniata</taxon>
        <taxon>Vertebrata</taxon>
        <taxon>Euteleostomi</taxon>
        <taxon>Mammalia</taxon>
        <taxon>Eutheria</taxon>
        <taxon>Euarchontoglires</taxon>
        <taxon>Primates</taxon>
        <taxon>Haplorrhini</taxon>
        <taxon>Catarrhini</taxon>
        <taxon>Hominidae</taxon>
        <taxon>Homo</taxon>
    </lineage>
</organism>
<protein>
    <recommendedName>
        <fullName>DNA ligase 3</fullName>
        <ecNumber evidence="7 11">6.5.1.1</ecNumber>
    </recommendedName>
    <alternativeName>
        <fullName>DNA ligase III</fullName>
    </alternativeName>
    <alternativeName>
        <fullName>Polydeoxyribonucleotide synthase [ATP] 3</fullName>
    </alternativeName>
</protein>
<gene>
    <name type="primary">LIG3</name>
</gene>
<proteinExistence type="evidence at protein level"/>
<feature type="transit peptide" description="Mitochondrion" evidence="2">
    <location>
        <begin position="1"/>
        <end position="42"/>
    </location>
</feature>
<feature type="chain" id="PRO_0000059574" description="DNA ligase 3">
    <location>
        <begin position="43"/>
        <end position="1009"/>
    </location>
</feature>
<feature type="domain" description="BRCT" evidence="3">
    <location>
        <begin position="933"/>
        <end position="1009"/>
    </location>
</feature>
<feature type="zinc finger region" description="PARP-type" evidence="4 8">
    <location>
        <begin position="93"/>
        <end position="185"/>
    </location>
</feature>
<feature type="region of interest" description="Disordered" evidence="6">
    <location>
        <begin position="224"/>
        <end position="256"/>
    </location>
</feature>
<feature type="region of interest" description="Interaction with DNA" evidence="11">
    <location>
        <begin position="277"/>
        <end position="280"/>
    </location>
</feature>
<feature type="region of interest" description="Interaction with DNA" evidence="11">
    <location>
        <begin position="318"/>
        <end position="323"/>
    </location>
</feature>
<feature type="region of interest" description="Interaction with DNA" evidence="11">
    <location>
        <begin position="388"/>
        <end position="391"/>
    </location>
</feature>
<feature type="region of interest" description="Interaction with DNA" evidence="11">
    <location>
        <begin position="421"/>
        <end position="427"/>
    </location>
</feature>
<feature type="region of interest" description="Disordered" evidence="6">
    <location>
        <begin position="842"/>
        <end position="917"/>
    </location>
</feature>
<feature type="compositionally biased region" description="Low complexity" evidence="6">
    <location>
        <begin position="240"/>
        <end position="252"/>
    </location>
</feature>
<feature type="compositionally biased region" description="Low complexity" evidence="6">
    <location>
        <begin position="845"/>
        <end position="854"/>
    </location>
</feature>
<feature type="compositionally biased region" description="Low complexity" evidence="6">
    <location>
        <begin position="863"/>
        <end position="877"/>
    </location>
</feature>
<feature type="compositionally biased region" description="Polar residues" evidence="6">
    <location>
        <begin position="884"/>
        <end position="898"/>
    </location>
</feature>
<feature type="active site" description="N6-AMP-lysine intermediate" evidence="5 11">
    <location>
        <position position="508"/>
    </location>
</feature>
<feature type="binding site" evidence="4">
    <location>
        <position position="105"/>
    </location>
    <ligand>
        <name>Zn(2+)</name>
        <dbReference type="ChEBI" id="CHEBI:29105"/>
    </ligand>
</feature>
<feature type="binding site" evidence="4">
    <location>
        <position position="108"/>
    </location>
    <ligand>
        <name>Zn(2+)</name>
        <dbReference type="ChEBI" id="CHEBI:29105"/>
    </ligand>
</feature>
<feature type="binding site" evidence="4">
    <location>
        <position position="139"/>
    </location>
    <ligand>
        <name>Zn(2+)</name>
        <dbReference type="ChEBI" id="CHEBI:29105"/>
    </ligand>
</feature>
<feature type="binding site" evidence="4">
    <location>
        <position position="142"/>
    </location>
    <ligand>
        <name>Zn(2+)</name>
        <dbReference type="ChEBI" id="CHEBI:29105"/>
    </ligand>
</feature>
<feature type="binding site" evidence="20 22">
    <location>
        <position position="506"/>
    </location>
    <ligand>
        <name>ATP</name>
        <dbReference type="ChEBI" id="CHEBI:30616"/>
    </ligand>
</feature>
<feature type="binding site" evidence="20 22">
    <location>
        <position position="513"/>
    </location>
    <ligand>
        <name>ATP</name>
        <dbReference type="ChEBI" id="CHEBI:30616"/>
    </ligand>
</feature>
<feature type="binding site" evidence="1">
    <location>
        <position position="528"/>
    </location>
    <ligand>
        <name>ATP</name>
        <dbReference type="ChEBI" id="CHEBI:30616"/>
    </ligand>
</feature>
<feature type="binding site" evidence="1">
    <location>
        <position position="560"/>
    </location>
    <ligand>
        <name>Mg(2+)</name>
        <dbReference type="ChEBI" id="CHEBI:18420"/>
        <label>1</label>
    </ligand>
</feature>
<feature type="binding site" evidence="1">
    <location>
        <position position="655"/>
    </location>
    <ligand>
        <name>Mg(2+)</name>
        <dbReference type="ChEBI" id="CHEBI:18420"/>
        <label>2</label>
    </ligand>
</feature>
<feature type="binding site" evidence="20 22">
    <location>
        <position position="660"/>
    </location>
    <ligand>
        <name>ATP</name>
        <dbReference type="ChEBI" id="CHEBI:30616"/>
    </ligand>
</feature>
<feature type="binding site" evidence="1">
    <location>
        <position position="671"/>
    </location>
    <ligand>
        <name>ATP</name>
        <dbReference type="ChEBI" id="CHEBI:30616"/>
    </ligand>
</feature>
<feature type="binding site" evidence="1">
    <location>
        <position position="675"/>
    </location>
    <ligand>
        <name>ATP</name>
        <dbReference type="ChEBI" id="CHEBI:30616"/>
    </ligand>
</feature>
<feature type="modified residue" description="Phosphoserine" evidence="23 25 26 27">
    <location>
        <position position="210"/>
    </location>
</feature>
<feature type="modified residue" description="Phosphoserine" evidence="27">
    <location>
        <position position="216"/>
    </location>
</feature>
<feature type="modified residue" description="Phosphoserine" evidence="24">
    <location>
        <position position="227"/>
    </location>
</feature>
<feature type="modified residue" description="Phosphoserine" evidence="27">
    <location>
        <position position="242"/>
    </location>
</feature>
<feature type="modified residue" description="Phosphoserine" evidence="27">
    <location>
        <position position="913"/>
    </location>
</feature>
<feature type="splice variant" id="VSP_057464" description="In isoform 3 and isoform 4." evidence="20">
    <location>
        <begin position="1"/>
        <end position="87"/>
    </location>
</feature>
<feature type="splice variant" id="VSP_001302" description="In isoform 2 and isoform 4." evidence="19 20">
    <original>VLLDIFTGVRLYLPPSTPDFSRLRRYFVAFDGDLVQEFDMTSATHVLGSRDKNPAAQQVSPEWIWACIRKRRLVAPC</original>
    <variation>RRPASEQRGRTVPAGRR</variation>
    <location>
        <begin position="933"/>
        <end position="1009"/>
    </location>
</feature>
<feature type="sequence variant" id="VAR_087020" description="In MTDPS20." evidence="16">
    <location>
        <begin position="29"/>
        <end position="1009"/>
    </location>
</feature>
<feature type="sequence variant" id="VAR_020196" description="In dbSNP:rs3744356.">
    <original>R</original>
    <variation>W</variation>
    <location>
        <position position="224"/>
    </location>
</feature>
<feature type="sequence variant" id="VAR_087021" description="In MTDPS20." evidence="15">
    <location>
        <begin position="267"/>
        <end position="1009"/>
    </location>
</feature>
<feature type="sequence variant" id="VAR_087022" description="In MTDPS20; may affect exon 9 splicing; decreased interaction with POLG; does not rescue cerebellar defects in a LIG3 deficiency zebrafish model; dbSNP:rs2142263659." evidence="15">
    <original>K</original>
    <variation>N</variation>
    <location>
        <position position="537"/>
    </location>
</feature>
<feature type="sequence variant" id="VAR_087023" description="In MTDPS20; severely decreased protein levels; dbSNP:rs1192808191." evidence="15">
    <original>P</original>
    <variation>L</variation>
    <location>
        <position position="609"/>
    </location>
</feature>
<feature type="sequence variant" id="VAR_036513" description="In a colorectal cancer sample; somatic mutation; dbSNP:rs757797167." evidence="9">
    <original>D</original>
    <variation>N</variation>
    <location>
        <position position="717"/>
    </location>
</feature>
<feature type="sequence variant" id="VAR_072387" description="In dbSNP:rs200981995." evidence="12">
    <original>Y</original>
    <variation>H</variation>
    <location>
        <position position="768"/>
    </location>
</feature>
<feature type="sequence variant" id="VAR_087024" description="In MTDPS20." evidence="15">
    <location>
        <begin position="811"/>
        <end position="1009"/>
    </location>
</feature>
<feature type="sequence variant" id="VAR_018807" description="In dbSNP:rs3136025." evidence="18">
    <original>R</original>
    <variation>H</variation>
    <location>
        <position position="867"/>
    </location>
</feature>
<feature type="sequence variant" id="VAR_021938" description="In dbSNP:rs4986974.">
    <original>K</original>
    <variation>T</variation>
    <location>
        <position position="898"/>
    </location>
</feature>
<feature type="sequence variant" id="VAR_087025" description="In MTDPS20; severely decreased protein levels; does not rescue cerebellar defects in a LIG3 deficiency zebrafish model; dbSNP:rs199702205." evidence="15">
    <original>G</original>
    <variation>R</variation>
    <location>
        <position position="964"/>
    </location>
</feature>
<feature type="sequence variant" id="VAR_020197" description="In dbSNP:rs4986973.">
    <original>P</original>
    <variation>S</variation>
    <location>
        <position position="986"/>
    </location>
</feature>
<feature type="sequence variant" id="VAR_087026" description="In MTDPS20; severely decreased protein levels; dbSNP:rs2142294288." evidence="15">
    <original>C</original>
    <variation>Y</variation>
    <location>
        <position position="999"/>
    </location>
</feature>
<feature type="mutagenesis site" description="Nearly abolishes ligase activity with blunt-ended DNA, but not with nicked DNA." evidence="11">
    <original>K</original>
    <variation>E</variation>
    <location>
        <position position="410"/>
    </location>
</feature>
<feature type="mutagenesis site" description="Abolishes ligase activity with blunt-ended DNA, but not with nicked DNA." evidence="11">
    <original>R</original>
    <variation>E</variation>
    <location>
        <position position="414"/>
    </location>
</feature>
<feature type="strand" evidence="29">
    <location>
        <begin position="92"/>
        <end position="97"/>
    </location>
</feature>
<feature type="strand" evidence="29">
    <location>
        <begin position="117"/>
        <end position="124"/>
    </location>
</feature>
<feature type="helix" evidence="29">
    <location>
        <begin position="140"/>
        <end position="149"/>
    </location>
</feature>
<feature type="strand" evidence="29">
    <location>
        <begin position="152"/>
        <end position="154"/>
    </location>
</feature>
<feature type="strand" evidence="29">
    <location>
        <begin position="161"/>
        <end position="165"/>
    </location>
</feature>
<feature type="turn" evidence="29">
    <location>
        <begin position="166"/>
        <end position="168"/>
    </location>
</feature>
<feature type="helix" evidence="29">
    <location>
        <begin position="171"/>
        <end position="185"/>
    </location>
</feature>
<feature type="strand" evidence="29">
    <location>
        <begin position="188"/>
        <end position="190"/>
    </location>
</feature>
<feature type="helix" evidence="30">
    <location>
        <begin position="259"/>
        <end position="261"/>
    </location>
</feature>
<feature type="helix" evidence="30">
    <location>
        <begin position="263"/>
        <end position="274"/>
    </location>
</feature>
<feature type="helix" evidence="30">
    <location>
        <begin position="279"/>
        <end position="291"/>
    </location>
</feature>
<feature type="helix" evidence="30">
    <location>
        <begin position="303"/>
        <end position="310"/>
    </location>
</feature>
<feature type="turn" evidence="30">
    <location>
        <begin position="312"/>
        <end position="314"/>
    </location>
</feature>
<feature type="helix" evidence="30">
    <location>
        <begin position="323"/>
        <end position="334"/>
    </location>
</feature>
<feature type="helix" evidence="30">
    <location>
        <begin position="338"/>
        <end position="344"/>
    </location>
</feature>
<feature type="helix" evidence="30">
    <location>
        <begin position="345"/>
        <end position="347"/>
    </location>
</feature>
<feature type="helix" evidence="30">
    <location>
        <begin position="350"/>
        <end position="359"/>
    </location>
</feature>
<feature type="strand" evidence="30">
    <location>
        <begin position="362"/>
        <end position="364"/>
    </location>
</feature>
<feature type="helix" evidence="30">
    <location>
        <begin position="374"/>
        <end position="385"/>
    </location>
</feature>
<feature type="helix" evidence="30">
    <location>
        <begin position="390"/>
        <end position="401"/>
    </location>
</feature>
<feature type="helix" evidence="30">
    <location>
        <begin position="407"/>
        <end position="416"/>
    </location>
</feature>
<feature type="strand" evidence="30">
    <location>
        <begin position="421"/>
        <end position="423"/>
    </location>
</feature>
<feature type="helix" evidence="30">
    <location>
        <begin position="426"/>
        <end position="431"/>
    </location>
</feature>
<feature type="helix" evidence="30">
    <location>
        <begin position="437"/>
        <end position="443"/>
    </location>
</feature>
<feature type="helix" evidence="30">
    <location>
        <begin position="447"/>
        <end position="459"/>
    </location>
</feature>
<feature type="strand" evidence="30">
    <location>
        <begin position="485"/>
        <end position="488"/>
    </location>
</feature>
<feature type="helix" evidence="30">
    <location>
        <begin position="492"/>
        <end position="498"/>
    </location>
</feature>
<feature type="strand" evidence="30">
    <location>
        <begin position="503"/>
        <end position="507"/>
    </location>
</feature>
<feature type="strand" evidence="30">
    <location>
        <begin position="511"/>
        <end position="519"/>
    </location>
</feature>
<feature type="strand" evidence="30">
    <location>
        <begin position="522"/>
        <end position="526"/>
    </location>
</feature>
<feature type="helix" evidence="30">
    <location>
        <begin position="535"/>
        <end position="537"/>
    </location>
</feature>
<feature type="turn" evidence="30">
    <location>
        <begin position="538"/>
        <end position="540"/>
    </location>
</feature>
<feature type="helix" evidence="30">
    <location>
        <begin position="541"/>
        <end position="543"/>
    </location>
</feature>
<feature type="helix" evidence="30">
    <location>
        <begin position="545"/>
        <end position="548"/>
    </location>
</feature>
<feature type="strand" evidence="30">
    <location>
        <begin position="553"/>
        <end position="564"/>
    </location>
</feature>
<feature type="turn" evidence="30">
    <location>
        <begin position="566"/>
        <end position="568"/>
    </location>
</feature>
<feature type="helix" evidence="30">
    <location>
        <begin position="574"/>
        <end position="577"/>
    </location>
</feature>
<feature type="helix" evidence="30">
    <location>
        <begin position="579"/>
        <end position="584"/>
    </location>
</feature>
<feature type="strand" evidence="30">
    <location>
        <begin position="590"/>
        <end position="600"/>
    </location>
</feature>
<feature type="helix" evidence="30">
    <location>
        <begin position="610"/>
        <end position="620"/>
    </location>
</feature>
<feature type="turn" evidence="30">
    <location>
        <begin position="625"/>
        <end position="627"/>
    </location>
</feature>
<feature type="strand" evidence="30">
    <location>
        <begin position="628"/>
        <end position="630"/>
    </location>
</feature>
<feature type="strand" evidence="30">
    <location>
        <begin position="633"/>
        <end position="636"/>
    </location>
</feature>
<feature type="helix" evidence="30">
    <location>
        <begin position="639"/>
        <end position="651"/>
    </location>
</feature>
<feature type="strand" evidence="30">
    <location>
        <begin position="657"/>
        <end position="663"/>
    </location>
</feature>
<feature type="strand" evidence="30">
    <location>
        <begin position="671"/>
        <end position="676"/>
    </location>
</feature>
<feature type="turn" evidence="30">
    <location>
        <begin position="678"/>
        <end position="680"/>
    </location>
</feature>
<feature type="strand" evidence="30">
    <location>
        <begin position="688"/>
        <end position="698"/>
    </location>
</feature>
<feature type="strand" evidence="30">
    <location>
        <begin position="710"/>
        <end position="716"/>
    </location>
</feature>
<feature type="turn" evidence="30">
    <location>
        <begin position="718"/>
        <end position="720"/>
    </location>
</feature>
<feature type="strand" evidence="30">
    <location>
        <begin position="721"/>
        <end position="729"/>
    </location>
</feature>
<feature type="helix" evidence="30">
    <location>
        <begin position="735"/>
        <end position="740"/>
    </location>
</feature>
<feature type="turn" evidence="30">
    <location>
        <begin position="741"/>
        <end position="743"/>
    </location>
</feature>
<feature type="strand" evidence="30">
    <location>
        <begin position="780"/>
        <end position="787"/>
    </location>
</feature>
<feature type="strand" evidence="30">
    <location>
        <begin position="789"/>
        <end position="791"/>
    </location>
</feature>
<feature type="strand" evidence="30">
    <location>
        <begin position="795"/>
        <end position="797"/>
    </location>
</feature>
<feature type="strand" evidence="30">
    <location>
        <begin position="800"/>
        <end position="804"/>
    </location>
</feature>
<feature type="strand" evidence="30">
    <location>
        <begin position="816"/>
        <end position="819"/>
    </location>
</feature>
<feature type="helix" evidence="30">
    <location>
        <begin position="822"/>
        <end position="830"/>
    </location>
</feature>
<feature type="helix" evidence="28">
    <location>
        <begin position="924"/>
        <end position="927"/>
    </location>
</feature>
<feature type="turn" evidence="32">
    <location>
        <begin position="930"/>
        <end position="932"/>
    </location>
</feature>
<feature type="strand" evidence="28">
    <location>
        <begin position="936"/>
        <end position="938"/>
    </location>
</feature>
<feature type="strand" evidence="32">
    <location>
        <begin position="942"/>
        <end position="944"/>
    </location>
</feature>
<feature type="helix" evidence="31">
    <location>
        <begin position="952"/>
        <end position="961"/>
    </location>
</feature>
<feature type="helix" evidence="31">
    <location>
        <begin position="969"/>
        <end position="974"/>
    </location>
</feature>
<feature type="strand" evidence="31">
    <location>
        <begin position="976"/>
        <end position="980"/>
    </location>
</feature>
<feature type="strand" evidence="32">
    <location>
        <begin position="982"/>
        <end position="984"/>
    </location>
</feature>
<feature type="strand" evidence="31">
    <location>
        <begin position="988"/>
        <end position="991"/>
    </location>
</feature>
<feature type="helix" evidence="31">
    <location>
        <begin position="993"/>
        <end position="1002"/>
    </location>
</feature>
<comment type="function">
    <text evidence="7 14">Isoform 3 functions as a heterodimer with DNA-repair protein XRCC1 in the nucleus and can correct defective DNA strand-break repair and sister chromatid exchange following treatment with ionizing radiation and alkylating agents. Isoform 1 is targeted to mitochondria, where it functions as a DNA ligase in mitochondrial base-excision DNA repair (PubMed:10207110, PubMed:24674627).</text>
</comment>
<comment type="catalytic activity">
    <reaction evidence="5 7 11">
        <text>ATP + (deoxyribonucleotide)n-3'-hydroxyl + 5'-phospho-(deoxyribonucleotide)m = (deoxyribonucleotide)n+m + AMP + diphosphate.</text>
        <dbReference type="EC" id="6.5.1.1"/>
    </reaction>
</comment>
<comment type="cofactor">
    <cofactor evidence="1">
        <name>Mg(2+)</name>
        <dbReference type="ChEBI" id="CHEBI:18420"/>
    </cofactor>
</comment>
<comment type="subunit">
    <text evidence="10 13 15 17">Isoform 3 interacts (via BRCT domain) with the nuclear DNA-repair protein XRCC1. Interacts with POLG (PubMed:33855352). Interacts with POLB (PubMed:19336415).</text>
</comment>
<comment type="interaction">
    <interactant intactId="EBI-1753381">
        <id>P49916</id>
    </interactant>
    <interactant intactId="EBI-751711">
        <id>P61244</id>
        <label>MAX</label>
    </interactant>
    <organismsDiffer>false</organismsDiffer>
    <experiments>2</experiments>
</comment>
<comment type="subcellular location">
    <molecule>Isoform 1</molecule>
    <subcellularLocation>
        <location evidence="7 14">Mitochondrion</location>
    </subcellularLocation>
    <text evidence="7">Contains an N-terminal mitochondrial transit peptide.</text>
</comment>
<comment type="subcellular location">
    <molecule>Isoform 2</molecule>
    <subcellularLocation>
        <location evidence="21">Mitochondrion</location>
    </subcellularLocation>
    <text evidence="21">Contains an N-terminal mitochondrial transit peptide.</text>
</comment>
<comment type="subcellular location">
    <molecule>Isoform 3</molecule>
    <subcellularLocation>
        <location evidence="7">Nucleus</location>
    </subcellularLocation>
    <text evidence="7">Lacks the N-terminal mitochondrial transit peptide.</text>
</comment>
<comment type="subcellular location">
    <molecule>Isoform 4</molecule>
    <subcellularLocation>
        <location evidence="21">Nucleus</location>
    </subcellularLocation>
    <text evidence="21">Lacks the N-terminal mitochondrial transit peptide.</text>
</comment>
<comment type="alternative products">
    <event type="alternative splicing"/>
    <event type="alternative initiation"/>
    <isoform>
        <id>P49916-1</id>
        <name>1</name>
        <sequence type="displayed"/>
    </isoform>
    <isoform>
        <id>P49916-2</id>
        <name>2</name>
        <sequence type="described" ref="VSP_001302"/>
    </isoform>
    <isoform>
        <id>P49916-3</id>
        <name>3</name>
        <name>Alpha</name>
        <sequence type="described" ref="VSP_057464"/>
    </isoform>
    <isoform>
        <id>P49916-4</id>
        <name>4</name>
        <name>Beta</name>
        <sequence type="described" ref="VSP_057464 VSP_001302"/>
    </isoform>
</comment>
<comment type="tissue specificity">
    <text>Testis, thymus, prostate and heart.</text>
</comment>
<comment type="domain">
    <text evidence="11">The PARP-type zinc finger is required for DNA ligase activity.</text>
</comment>
<comment type="disease" evidence="15 16">
    <disease id="DI-06362">
        <name>Mitochondrial DNA depletion syndrome 20, MNGIE type</name>
        <acronym>MTDPS20</acronym>
        <description>An autosomal recessive mitochondrial disorder characterized by severe gut dysmotility, muscle weakness and atrophy, neurological abnormalities including epilepsy, migraine, stroke-like episodes, learning difficulties or cognitive decline, and neurogenic bladder. Brain imaging usually shows diffuse leukoencephalopathy and may show cerebellar atrophy. Disease onset can range from infancy to the teenage years.</description>
        <dbReference type="MIM" id="619780"/>
    </disease>
    <text>The disease is caused by variants affecting the gene represented in this entry.</text>
</comment>
<comment type="miscellaneous">
    <molecule>Isoform 1</molecule>
    <text>Produced by alternative splicing.</text>
</comment>
<comment type="miscellaneous">
    <molecule>Isoform 2</molecule>
    <text evidence="20">Produced by alternative splicing.</text>
</comment>
<comment type="miscellaneous">
    <molecule>Isoform 3</molecule>
    <text evidence="20">Produced by alternative initiation of isoform 1.</text>
</comment>
<comment type="miscellaneous">
    <molecule>Isoform 4</molecule>
    <text evidence="20">Produced by alternative initiation of isoform 2.</text>
</comment>
<comment type="similarity">
    <text evidence="20">Belongs to the ATP-dependent DNA ligase family.</text>
</comment>
<comment type="online information" name="Wikipedia">
    <link uri="https://en.wikipedia.org/wiki/DNA_ligase"/>
    <text>DNA ligase entry</text>
</comment>
<sequence length="1009" mass="112907">MSLAFKIFFPQTLRALSRKELCLFRKHHWRDVRQFSQWSETDLLHGHPLFLRRKPVLSFQGSHLRSRATYLVFLPGLHVGLCSGPCEMAEQRFCVDYAKRGTAGCKKCKEKIVKGVCRIGKVVPNPFSESGGDMKEWYHIKCMFEKLERARATTKKIEDLTELEGWEELEDNEKEQITQHIADLSSKAAGTPKKKAVVQAKLTTTGQVTSPVKGASFVTSTNPRKFSGFSAKPNNSGEAPSSPTPKRSLSSSKCDPRHKDCLLREFRKLCAMVADNPSYNTKTQIIQDFLRKGSAGDGFHGDVYLTVKLLLPGVIKTVYNLNDKQIVKLFSRIFNCNPDDMARDLEQGDVSETIRVFFEQSKSFPPAAKSLLTIQEVDEFLLRLSKLTKEDEQQQALQDIASRCTANDLKCIIRLIKHDLKMNSGAKHVLDALDPNAYEAFKASRNLQDVVERVLHNAQEVEKEPGQRRALSVQASLMTPVQPMLAEACKSVEYAMKKCPNGMFSEIKYDGERVQVHKNGDHFSYFSRSLKPVLPHKVAHFKDYIPQAFPGGHSMILDSEVLLIDNKTGKPLPFGTLGVHKKAAFQDANVCLFVFDCIYFNDVSLMDRPLCERRKFLHDNMVEIPNRIMFSEMKRVTKALDLADMITRVIQEGLEGLVLKDVKGTYEPGKRHWLKVKKDYLNEGAMADTADLVVLGAFYGQGSKGGMMSIFLMGCYDPGSQKWCTVTKCAGGHDDATLARLQNELDMVKISKDPSKIPSWLKVNKIYYPDFIVPDPKKAAVWEITGAEFSKSEAHTADGISIRFPRCTRIRDDKDWKSATNLPQLKELYQLSKEKADFTVVAGDEGSSTTGGSSEENKGPSGSAVSRKAPSKPSASTKKAEGKLSNSNSKDGNMQTAKPSAMKVGEKLATKSSPVKVGEKRKAADETLCQTKVLLDIFTGVRLYLPPSTPDFSRLRRYFVAFDGDLVQEFDMTSATHVLGSRDKNPAAQQVSPEWIWACIRKRRLVAPC</sequence>